<reference key="1">
    <citation type="journal article" date="2006" name="Proc. Natl. Acad. Sci. U.S.A.">
        <title>Identification of genes subject to positive selection in uropathogenic strains of Escherichia coli: a comparative genomics approach.</title>
        <authorList>
            <person name="Chen S.L."/>
            <person name="Hung C.-S."/>
            <person name="Xu J."/>
            <person name="Reigstad C.S."/>
            <person name="Magrini V."/>
            <person name="Sabo A."/>
            <person name="Blasiar D."/>
            <person name="Bieri T."/>
            <person name="Meyer R.R."/>
            <person name="Ozersky P."/>
            <person name="Armstrong J.R."/>
            <person name="Fulton R.S."/>
            <person name="Latreille J.P."/>
            <person name="Spieth J."/>
            <person name="Hooton T.M."/>
            <person name="Mardis E.R."/>
            <person name="Hultgren S.J."/>
            <person name="Gordon J.I."/>
        </authorList>
    </citation>
    <scope>NUCLEOTIDE SEQUENCE [LARGE SCALE GENOMIC DNA]</scope>
    <source>
        <strain>UTI89 / UPEC</strain>
    </source>
</reference>
<organism>
    <name type="scientific">Escherichia coli (strain UTI89 / UPEC)</name>
    <dbReference type="NCBI Taxonomy" id="364106"/>
    <lineage>
        <taxon>Bacteria</taxon>
        <taxon>Pseudomonadati</taxon>
        <taxon>Pseudomonadota</taxon>
        <taxon>Gammaproteobacteria</taxon>
        <taxon>Enterobacterales</taxon>
        <taxon>Enterobacteriaceae</taxon>
        <taxon>Escherichia</taxon>
    </lineage>
</organism>
<comment type="function">
    <text evidence="1">Catalyzes the isomerization of L-xylulose-5-phosphate to L-ribulose-5-phosphate. Is involved in the anaerobic L-ascorbate utilization.</text>
</comment>
<comment type="catalytic activity">
    <reaction evidence="1">
        <text>L-ribulose 5-phosphate = L-xylulose 5-phosphate</text>
        <dbReference type="Rhea" id="RHEA:18497"/>
        <dbReference type="ChEBI" id="CHEBI:57829"/>
        <dbReference type="ChEBI" id="CHEBI:58226"/>
        <dbReference type="EC" id="5.1.3.22"/>
    </reaction>
</comment>
<comment type="pathway">
    <text evidence="1">Cofactor degradation; L-ascorbate degradation; D-xylulose 5-phosphate from L-ascorbate: step 3/4.</text>
</comment>
<comment type="induction">
    <text evidence="1">Induced by L-ascorbate. Repressed by UlaR.</text>
</comment>
<comment type="similarity">
    <text evidence="1">Belongs to the L-ribulose-5-phosphate 3-epimerase family.</text>
</comment>
<evidence type="ECO:0000255" key="1">
    <source>
        <dbReference type="HAMAP-Rule" id="MF_01951"/>
    </source>
</evidence>
<dbReference type="EC" id="5.1.3.22" evidence="1"/>
<dbReference type="EMBL" id="CP000243">
    <property type="protein sequence ID" value="ABE10201.1"/>
    <property type="molecule type" value="Genomic_DNA"/>
</dbReference>
<dbReference type="RefSeq" id="WP_000949498.1">
    <property type="nucleotide sequence ID" value="NZ_CP064825.1"/>
</dbReference>
<dbReference type="SMR" id="Q1R363"/>
<dbReference type="GeneID" id="86861409"/>
<dbReference type="KEGG" id="eci:UTI89_C4797"/>
<dbReference type="HOGENOM" id="CLU_082738_0_0_6"/>
<dbReference type="UniPathway" id="UPA00263">
    <property type="reaction ID" value="UER00379"/>
</dbReference>
<dbReference type="Proteomes" id="UP000001952">
    <property type="component" value="Chromosome"/>
</dbReference>
<dbReference type="GO" id="GO:0016861">
    <property type="term" value="F:intramolecular oxidoreductase activity, interconverting aldoses and ketoses"/>
    <property type="evidence" value="ECO:0007669"/>
    <property type="project" value="InterPro"/>
</dbReference>
<dbReference type="GO" id="GO:0034015">
    <property type="term" value="F:L-ribulose-5-phosphate 3-epimerase activity"/>
    <property type="evidence" value="ECO:0007669"/>
    <property type="project" value="UniProtKB-UniRule"/>
</dbReference>
<dbReference type="GO" id="GO:0019854">
    <property type="term" value="P:L-ascorbic acid catabolic process"/>
    <property type="evidence" value="ECO:0007669"/>
    <property type="project" value="UniProtKB-UniRule"/>
</dbReference>
<dbReference type="FunFam" id="3.20.20.150:FF:000003">
    <property type="entry name" value="L-ribulose-5-phosphate 3-epimerase UlaE"/>
    <property type="match status" value="1"/>
</dbReference>
<dbReference type="Gene3D" id="3.20.20.150">
    <property type="entry name" value="Divalent-metal-dependent TIM barrel enzymes"/>
    <property type="match status" value="1"/>
</dbReference>
<dbReference type="HAMAP" id="MF_01951">
    <property type="entry name" value="UlaE"/>
    <property type="match status" value="1"/>
</dbReference>
<dbReference type="InterPro" id="IPR004560">
    <property type="entry name" value="L-Ru-5P_3-Epase"/>
</dbReference>
<dbReference type="InterPro" id="IPR023492">
    <property type="entry name" value="L-Ru-5P_3-Epase_Enterobacteria"/>
</dbReference>
<dbReference type="InterPro" id="IPR050417">
    <property type="entry name" value="Sugar_Epim/Isomerase"/>
</dbReference>
<dbReference type="InterPro" id="IPR036237">
    <property type="entry name" value="Xyl_isomerase-like_sf"/>
</dbReference>
<dbReference type="InterPro" id="IPR013022">
    <property type="entry name" value="Xyl_isomerase-like_TIM-brl"/>
</dbReference>
<dbReference type="NCBIfam" id="TIGR00542">
    <property type="entry name" value="hxl6Piso_put"/>
    <property type="match status" value="1"/>
</dbReference>
<dbReference type="NCBIfam" id="NF009688">
    <property type="entry name" value="PRK13209.1"/>
    <property type="match status" value="1"/>
</dbReference>
<dbReference type="NCBIfam" id="NF009689">
    <property type="entry name" value="PRK13210.1"/>
    <property type="match status" value="1"/>
</dbReference>
<dbReference type="PANTHER" id="PTHR43489">
    <property type="entry name" value="ISOMERASE"/>
    <property type="match status" value="1"/>
</dbReference>
<dbReference type="PANTHER" id="PTHR43489:SF8">
    <property type="entry name" value="L-RIBULOSE-5-PHOSPHATE 3-EPIMERASE ULAE"/>
    <property type="match status" value="1"/>
</dbReference>
<dbReference type="Pfam" id="PF01261">
    <property type="entry name" value="AP_endonuc_2"/>
    <property type="match status" value="1"/>
</dbReference>
<dbReference type="SUPFAM" id="SSF51658">
    <property type="entry name" value="Xylose isomerase-like"/>
    <property type="match status" value="1"/>
</dbReference>
<accession>Q1R363</accession>
<gene>
    <name evidence="1" type="primary">ulaE</name>
    <name type="ordered locus">UTI89_C4797</name>
</gene>
<keyword id="KW-0413">Isomerase</keyword>
<feature type="chain" id="PRO_1000070634" description="L-ribulose-5-phosphate 3-epimerase UlaE">
    <location>
        <begin position="1"/>
        <end position="284"/>
    </location>
</feature>
<sequence length="284" mass="32035">MLSKQIPLGIYEKALPAGECWLERLQLAKTLGFDFVEMSVDETDDRLSRLDWSREQRLALVNAIVETGVRVPSMCLSAHRRFPLGSEDDAVRAQGLEIMRKAIQFAQDVGIRVIQLAGYDVYYQEANNETRRRFRDGLKESVEMASRAQVTLAMEIMDYPLMNSISKALGYAHYLNNPWFQLYPDIGNLSAWDNDVQMELQAGIGHIVAVHVKDTKPGVFKNVPFGEGVVDFERCFETLKQSGYCGPYLIEMWSETAEDPAAEVAKARDWVKARMAKAGMVEAA</sequence>
<proteinExistence type="inferred from homology"/>
<protein>
    <recommendedName>
        <fullName evidence="1">L-ribulose-5-phosphate 3-epimerase UlaE</fullName>
        <ecNumber evidence="1">5.1.3.22</ecNumber>
    </recommendedName>
    <alternativeName>
        <fullName evidence="1">L-ascorbate utilization protein E</fullName>
    </alternativeName>
    <alternativeName>
        <fullName evidence="1">L-xylulose-5-phosphate 3-epimerase</fullName>
    </alternativeName>
</protein>
<name>ULAE_ECOUT</name>